<gene>
    <name type="ordered locus">HP_0175</name>
</gene>
<evidence type="ECO:0000255" key="1"/>
<evidence type="ECO:0000255" key="2">
    <source>
        <dbReference type="PROSITE-ProRule" id="PRU00278"/>
    </source>
</evidence>
<evidence type="ECO:0007829" key="3">
    <source>
        <dbReference type="PDB" id="5EZ1"/>
    </source>
</evidence>
<evidence type="ECO:0007829" key="4">
    <source>
        <dbReference type="PDB" id="6BHF"/>
    </source>
</evidence>
<keyword id="KW-0002">3D-structure</keyword>
<keyword id="KW-0413">Isomerase</keyword>
<keyword id="KW-1185">Reference proteome</keyword>
<keyword id="KW-0697">Rotamase</keyword>
<keyword id="KW-0732">Signal</keyword>
<accession>P56112</accession>
<sequence length="299" mass="34031">MKKNILNLALVGALSTSFLMAKPAHNANNATHNTKKTTDSSAGVLATVDGRPITKSDFDMIKQRNPNFDFDKLKEKEKEALIDQAIRTALVENEAKTEKLDSTPEFKAMMEAVKKQALVEFWAKKQAEEVKKVQIPEKEMQDFYNANKDQLFVKQEAHARHILVKTEDEAKRIISEIDKQPKAKKEAKFIELANRDTIDPNSKNAQNGGDLGKFQKNQMAPDFSKAAFALTPGDYTKTPVKTEFGYHIIYLISKDSPVTYTYEQAKPTIKGMLQEKLFQERMNQRIEELRKHAKIVINK</sequence>
<comment type="catalytic activity">
    <reaction>
        <text>[protein]-peptidylproline (omega=180) = [protein]-peptidylproline (omega=0)</text>
        <dbReference type="Rhea" id="RHEA:16237"/>
        <dbReference type="Rhea" id="RHEA-COMP:10747"/>
        <dbReference type="Rhea" id="RHEA-COMP:10748"/>
        <dbReference type="ChEBI" id="CHEBI:83833"/>
        <dbReference type="ChEBI" id="CHEBI:83834"/>
        <dbReference type="EC" id="5.2.1.8"/>
    </reaction>
</comment>
<reference key="1">
    <citation type="journal article" date="1997" name="Nature">
        <title>The complete genome sequence of the gastric pathogen Helicobacter pylori.</title>
        <authorList>
            <person name="Tomb J.-F."/>
            <person name="White O."/>
            <person name="Kerlavage A.R."/>
            <person name="Clayton R.A."/>
            <person name="Sutton G.G."/>
            <person name="Fleischmann R.D."/>
            <person name="Ketchum K.A."/>
            <person name="Klenk H.-P."/>
            <person name="Gill S.R."/>
            <person name="Dougherty B.A."/>
            <person name="Nelson K.E."/>
            <person name="Quackenbush J."/>
            <person name="Zhou L."/>
            <person name="Kirkness E.F."/>
            <person name="Peterson S.N."/>
            <person name="Loftus B.J."/>
            <person name="Richardson D.L."/>
            <person name="Dodson R.J."/>
            <person name="Khalak H.G."/>
            <person name="Glodek A."/>
            <person name="McKenney K."/>
            <person name="FitzGerald L.M."/>
            <person name="Lee N."/>
            <person name="Adams M.D."/>
            <person name="Hickey E.K."/>
            <person name="Berg D.E."/>
            <person name="Gocayne J.D."/>
            <person name="Utterback T.R."/>
            <person name="Peterson J.D."/>
            <person name="Kelley J.M."/>
            <person name="Cotton M.D."/>
            <person name="Weidman J.F."/>
            <person name="Fujii C."/>
            <person name="Bowman C."/>
            <person name="Watthey L."/>
            <person name="Wallin E."/>
            <person name="Hayes W.S."/>
            <person name="Borodovsky M."/>
            <person name="Karp P.D."/>
            <person name="Smith H.O."/>
            <person name="Fraser C.M."/>
            <person name="Venter J.C."/>
        </authorList>
    </citation>
    <scope>NUCLEOTIDE SEQUENCE [LARGE SCALE GENOMIC DNA]</scope>
    <source>
        <strain>ATCC 700392 / 26695</strain>
    </source>
</reference>
<dbReference type="EC" id="5.2.1.8"/>
<dbReference type="EMBL" id="AE000511">
    <property type="protein sequence ID" value="AAD07245.1"/>
    <property type="molecule type" value="Genomic_DNA"/>
</dbReference>
<dbReference type="PIR" id="G64541">
    <property type="entry name" value="G64541"/>
</dbReference>
<dbReference type="RefSeq" id="NP_206974.1">
    <property type="nucleotide sequence ID" value="NC_000915.1"/>
</dbReference>
<dbReference type="PDB" id="5EZ1">
    <property type="method" value="X-ray"/>
    <property type="resolution" value="2.40 A"/>
    <property type="chains" value="A/B=33-299"/>
</dbReference>
<dbReference type="PDB" id="6BHF">
    <property type="method" value="X-ray"/>
    <property type="resolution" value="2.09 A"/>
    <property type="chains" value="A=1-299"/>
</dbReference>
<dbReference type="PDBsum" id="5EZ1"/>
<dbReference type="PDBsum" id="6BHF"/>
<dbReference type="SMR" id="P56112"/>
<dbReference type="DIP" id="DIP-3058N"/>
<dbReference type="IntAct" id="P56112">
    <property type="interactions" value="2"/>
</dbReference>
<dbReference type="MINT" id="P56112"/>
<dbReference type="STRING" id="85962.HP_0175"/>
<dbReference type="PaxDb" id="85962-C694_00870"/>
<dbReference type="EnsemblBacteria" id="AAD07245">
    <property type="protein sequence ID" value="AAD07245"/>
    <property type="gene ID" value="HP_0175"/>
</dbReference>
<dbReference type="KEGG" id="heo:C694_00870"/>
<dbReference type="KEGG" id="hpy:HP_0175"/>
<dbReference type="PATRIC" id="fig|85962.47.peg.189"/>
<dbReference type="eggNOG" id="COG0760">
    <property type="taxonomic scope" value="Bacteria"/>
</dbReference>
<dbReference type="InParanoid" id="P56112"/>
<dbReference type="OrthoDB" id="14196at2"/>
<dbReference type="PhylomeDB" id="P56112"/>
<dbReference type="EvolutionaryTrace" id="P56112"/>
<dbReference type="Proteomes" id="UP000000429">
    <property type="component" value="Chromosome"/>
</dbReference>
<dbReference type="GO" id="GO:0003755">
    <property type="term" value="F:peptidyl-prolyl cis-trans isomerase activity"/>
    <property type="evidence" value="ECO:0007669"/>
    <property type="project" value="UniProtKB-KW"/>
</dbReference>
<dbReference type="Gene3D" id="1.10.8.1040">
    <property type="match status" value="1"/>
</dbReference>
<dbReference type="Gene3D" id="3.10.50.40">
    <property type="match status" value="1"/>
</dbReference>
<dbReference type="InterPro" id="IPR046357">
    <property type="entry name" value="PPIase_dom_sf"/>
</dbReference>
<dbReference type="InterPro" id="IPR000297">
    <property type="entry name" value="PPIase_PpiC"/>
</dbReference>
<dbReference type="InterPro" id="IPR023058">
    <property type="entry name" value="PPIase_PpiC_CS"/>
</dbReference>
<dbReference type="InterPro" id="IPR050245">
    <property type="entry name" value="PrsA_foldase"/>
</dbReference>
<dbReference type="InterPro" id="IPR027304">
    <property type="entry name" value="Trigger_fact/SurA_dom_sf"/>
</dbReference>
<dbReference type="PANTHER" id="PTHR47245:SF2">
    <property type="entry name" value="PEPTIDYL-PROLYL CIS-TRANS ISOMERASE HP_0175-RELATED"/>
    <property type="match status" value="1"/>
</dbReference>
<dbReference type="PANTHER" id="PTHR47245">
    <property type="entry name" value="PEPTIDYLPROLYL ISOMERASE"/>
    <property type="match status" value="1"/>
</dbReference>
<dbReference type="Pfam" id="PF00639">
    <property type="entry name" value="Rotamase"/>
    <property type="match status" value="1"/>
</dbReference>
<dbReference type="SUPFAM" id="SSF54534">
    <property type="entry name" value="FKBP-like"/>
    <property type="match status" value="1"/>
</dbReference>
<dbReference type="SUPFAM" id="SSF109998">
    <property type="entry name" value="Triger factor/SurA peptide-binding domain-like"/>
    <property type="match status" value="1"/>
</dbReference>
<dbReference type="PROSITE" id="PS01096">
    <property type="entry name" value="PPIC_PPIASE_1"/>
    <property type="match status" value="1"/>
</dbReference>
<dbReference type="PROSITE" id="PS50198">
    <property type="entry name" value="PPIC_PPIASE_2"/>
    <property type="match status" value="1"/>
</dbReference>
<proteinExistence type="evidence at protein level"/>
<protein>
    <recommendedName>
        <fullName>Putative peptidyl-prolyl cis-trans isomerase HP_0175</fullName>
        <shortName>PPIase HP_0175</shortName>
        <ecNumber>5.2.1.8</ecNumber>
    </recommendedName>
    <alternativeName>
        <fullName>Rotamase HP_0175</fullName>
    </alternativeName>
</protein>
<organism>
    <name type="scientific">Helicobacter pylori (strain ATCC 700392 / 26695)</name>
    <name type="common">Campylobacter pylori</name>
    <dbReference type="NCBI Taxonomy" id="85962"/>
    <lineage>
        <taxon>Bacteria</taxon>
        <taxon>Pseudomonadati</taxon>
        <taxon>Campylobacterota</taxon>
        <taxon>Epsilonproteobacteria</taxon>
        <taxon>Campylobacterales</taxon>
        <taxon>Helicobacteraceae</taxon>
        <taxon>Helicobacter</taxon>
    </lineage>
</organism>
<feature type="signal peptide" evidence="1">
    <location>
        <begin position="1"/>
        <end position="21"/>
    </location>
</feature>
<feature type="chain" id="PRO_0000025547" description="Putative peptidyl-prolyl cis-trans isomerase HP_0175">
    <location>
        <begin position="22"/>
        <end position="299"/>
    </location>
</feature>
<feature type="domain" description="PpiC" evidence="2">
    <location>
        <begin position="154"/>
        <end position="253"/>
    </location>
</feature>
<feature type="strand" evidence="4">
    <location>
        <begin position="44"/>
        <end position="48"/>
    </location>
</feature>
<feature type="strand" evidence="4">
    <location>
        <begin position="51"/>
        <end position="54"/>
    </location>
</feature>
<feature type="helix" evidence="4">
    <location>
        <begin position="55"/>
        <end position="57"/>
    </location>
</feature>
<feature type="helix" evidence="4">
    <location>
        <begin position="70"/>
        <end position="72"/>
    </location>
</feature>
<feature type="helix" evidence="4">
    <location>
        <begin position="75"/>
        <end position="97"/>
    </location>
</feature>
<feature type="helix" evidence="3">
    <location>
        <begin position="100"/>
        <end position="102"/>
    </location>
</feature>
<feature type="helix" evidence="4">
    <location>
        <begin position="104"/>
        <end position="131"/>
    </location>
</feature>
<feature type="helix" evidence="4">
    <location>
        <begin position="137"/>
        <end position="151"/>
    </location>
</feature>
<feature type="strand" evidence="4">
    <location>
        <begin position="152"/>
        <end position="154"/>
    </location>
</feature>
<feature type="strand" evidence="4">
    <location>
        <begin position="156"/>
        <end position="166"/>
    </location>
</feature>
<feature type="helix" evidence="4">
    <location>
        <begin position="167"/>
        <end position="178"/>
    </location>
</feature>
<feature type="helix" evidence="4">
    <location>
        <begin position="182"/>
        <end position="184"/>
    </location>
</feature>
<feature type="helix" evidence="4">
    <location>
        <begin position="185"/>
        <end position="196"/>
    </location>
</feature>
<feature type="helix" evidence="4">
    <location>
        <begin position="200"/>
        <end position="205"/>
    </location>
</feature>
<feature type="strand" evidence="4">
    <location>
        <begin position="210"/>
        <end position="215"/>
    </location>
</feature>
<feature type="helix" evidence="4">
    <location>
        <begin position="216"/>
        <end position="218"/>
    </location>
</feature>
<feature type="helix" evidence="4">
    <location>
        <begin position="221"/>
        <end position="228"/>
    </location>
</feature>
<feature type="strand" evidence="4">
    <location>
        <begin position="240"/>
        <end position="242"/>
    </location>
</feature>
<feature type="strand" evidence="4">
    <location>
        <begin position="245"/>
        <end position="254"/>
    </location>
</feature>
<feature type="helix" evidence="4">
    <location>
        <begin position="262"/>
        <end position="290"/>
    </location>
</feature>
<name>Y175_HELPY</name>